<evidence type="ECO:0000255" key="1">
    <source>
        <dbReference type="HAMAP-Rule" id="MF_00052"/>
    </source>
</evidence>
<evidence type="ECO:0000255" key="2">
    <source>
        <dbReference type="PROSITE-ProRule" id="PRU01319"/>
    </source>
</evidence>
<comment type="function">
    <text evidence="1">Endonuclease that specifically degrades the RNA of RNA-DNA hybrids.</text>
</comment>
<comment type="catalytic activity">
    <reaction evidence="1">
        <text>Endonucleolytic cleavage to 5'-phosphomonoester.</text>
        <dbReference type="EC" id="3.1.26.4"/>
    </reaction>
</comment>
<comment type="cofactor">
    <cofactor evidence="1">
        <name>Mn(2+)</name>
        <dbReference type="ChEBI" id="CHEBI:29035"/>
    </cofactor>
    <cofactor evidence="1">
        <name>Mg(2+)</name>
        <dbReference type="ChEBI" id="CHEBI:18420"/>
    </cofactor>
    <text evidence="1">Manganese or magnesium. Binds 1 divalent metal ion per monomer in the absence of substrate. May bind a second metal ion after substrate binding.</text>
</comment>
<comment type="subcellular location">
    <subcellularLocation>
        <location evidence="1">Cytoplasm</location>
    </subcellularLocation>
</comment>
<comment type="similarity">
    <text evidence="1">Belongs to the RNase HII family.</text>
</comment>
<protein>
    <recommendedName>
        <fullName evidence="1">Ribonuclease HII</fullName>
        <shortName evidence="1">RNase HII</shortName>
        <ecNumber evidence="1">3.1.26.4</ecNumber>
    </recommendedName>
</protein>
<reference key="1">
    <citation type="submission" date="2008-02" db="EMBL/GenBank/DDBJ databases">
        <title>Complete sequence of Escherichia coli C str. ATCC 8739.</title>
        <authorList>
            <person name="Copeland A."/>
            <person name="Lucas S."/>
            <person name="Lapidus A."/>
            <person name="Glavina del Rio T."/>
            <person name="Dalin E."/>
            <person name="Tice H."/>
            <person name="Bruce D."/>
            <person name="Goodwin L."/>
            <person name="Pitluck S."/>
            <person name="Kiss H."/>
            <person name="Brettin T."/>
            <person name="Detter J.C."/>
            <person name="Han C."/>
            <person name="Kuske C.R."/>
            <person name="Schmutz J."/>
            <person name="Larimer F."/>
            <person name="Land M."/>
            <person name="Hauser L."/>
            <person name="Kyrpides N."/>
            <person name="Mikhailova N."/>
            <person name="Ingram L."/>
            <person name="Richardson P."/>
        </authorList>
    </citation>
    <scope>NUCLEOTIDE SEQUENCE [LARGE SCALE GENOMIC DNA]</scope>
    <source>
        <strain>ATCC 8739 / DSM 1576 / NBRC 3972 / NCIMB 8545 / WDCM 00012 / Crooks</strain>
    </source>
</reference>
<accession>B1IQF8</accession>
<name>RNH2_ECOLC</name>
<organism>
    <name type="scientific">Escherichia coli (strain ATCC 8739 / DSM 1576 / NBRC 3972 / NCIMB 8545 / WDCM 00012 / Crooks)</name>
    <dbReference type="NCBI Taxonomy" id="481805"/>
    <lineage>
        <taxon>Bacteria</taxon>
        <taxon>Pseudomonadati</taxon>
        <taxon>Pseudomonadota</taxon>
        <taxon>Gammaproteobacteria</taxon>
        <taxon>Enterobacterales</taxon>
        <taxon>Enterobacteriaceae</taxon>
        <taxon>Escherichia</taxon>
    </lineage>
</organism>
<gene>
    <name evidence="1" type="primary">rnhB</name>
    <name type="ordered locus">EcolC_3477</name>
</gene>
<proteinExistence type="inferred from homology"/>
<dbReference type="EC" id="3.1.26.4" evidence="1"/>
<dbReference type="EMBL" id="CP000946">
    <property type="protein sequence ID" value="ACA79091.1"/>
    <property type="molecule type" value="Genomic_DNA"/>
</dbReference>
<dbReference type="RefSeq" id="WP_000569405.1">
    <property type="nucleotide sequence ID" value="NZ_MTFT01000035.1"/>
</dbReference>
<dbReference type="SMR" id="B1IQF8"/>
<dbReference type="KEGG" id="ecl:EcolC_3477"/>
<dbReference type="HOGENOM" id="CLU_036532_3_2_6"/>
<dbReference type="GO" id="GO:0005737">
    <property type="term" value="C:cytoplasm"/>
    <property type="evidence" value="ECO:0007669"/>
    <property type="project" value="UniProtKB-SubCell"/>
</dbReference>
<dbReference type="GO" id="GO:0032299">
    <property type="term" value="C:ribonuclease H2 complex"/>
    <property type="evidence" value="ECO:0007669"/>
    <property type="project" value="TreeGrafter"/>
</dbReference>
<dbReference type="GO" id="GO:0030145">
    <property type="term" value="F:manganese ion binding"/>
    <property type="evidence" value="ECO:0007669"/>
    <property type="project" value="UniProtKB-UniRule"/>
</dbReference>
<dbReference type="GO" id="GO:0003723">
    <property type="term" value="F:RNA binding"/>
    <property type="evidence" value="ECO:0007669"/>
    <property type="project" value="InterPro"/>
</dbReference>
<dbReference type="GO" id="GO:0004523">
    <property type="term" value="F:RNA-DNA hybrid ribonuclease activity"/>
    <property type="evidence" value="ECO:0007669"/>
    <property type="project" value="UniProtKB-UniRule"/>
</dbReference>
<dbReference type="GO" id="GO:0043137">
    <property type="term" value="P:DNA replication, removal of RNA primer"/>
    <property type="evidence" value="ECO:0007669"/>
    <property type="project" value="TreeGrafter"/>
</dbReference>
<dbReference type="GO" id="GO:0006298">
    <property type="term" value="P:mismatch repair"/>
    <property type="evidence" value="ECO:0007669"/>
    <property type="project" value="TreeGrafter"/>
</dbReference>
<dbReference type="CDD" id="cd07182">
    <property type="entry name" value="RNase_HII_bacteria_HII_like"/>
    <property type="match status" value="1"/>
</dbReference>
<dbReference type="FunFam" id="3.30.420.10:FF:000006">
    <property type="entry name" value="Ribonuclease HII"/>
    <property type="match status" value="1"/>
</dbReference>
<dbReference type="Gene3D" id="3.30.420.10">
    <property type="entry name" value="Ribonuclease H-like superfamily/Ribonuclease H"/>
    <property type="match status" value="1"/>
</dbReference>
<dbReference type="HAMAP" id="MF_00052_B">
    <property type="entry name" value="RNase_HII_B"/>
    <property type="match status" value="1"/>
</dbReference>
<dbReference type="InterPro" id="IPR022898">
    <property type="entry name" value="RNase_HII"/>
</dbReference>
<dbReference type="InterPro" id="IPR001352">
    <property type="entry name" value="RNase_HII/HIII"/>
</dbReference>
<dbReference type="InterPro" id="IPR024567">
    <property type="entry name" value="RNase_HII/HIII_dom"/>
</dbReference>
<dbReference type="InterPro" id="IPR012337">
    <property type="entry name" value="RNaseH-like_sf"/>
</dbReference>
<dbReference type="InterPro" id="IPR036397">
    <property type="entry name" value="RNaseH_sf"/>
</dbReference>
<dbReference type="NCBIfam" id="NF000594">
    <property type="entry name" value="PRK00015.1-1"/>
    <property type="match status" value="1"/>
</dbReference>
<dbReference type="NCBIfam" id="NF000595">
    <property type="entry name" value="PRK00015.1-3"/>
    <property type="match status" value="1"/>
</dbReference>
<dbReference type="NCBIfam" id="NF000596">
    <property type="entry name" value="PRK00015.1-4"/>
    <property type="match status" value="1"/>
</dbReference>
<dbReference type="PANTHER" id="PTHR10954">
    <property type="entry name" value="RIBONUCLEASE H2 SUBUNIT A"/>
    <property type="match status" value="1"/>
</dbReference>
<dbReference type="PANTHER" id="PTHR10954:SF18">
    <property type="entry name" value="RIBONUCLEASE HII"/>
    <property type="match status" value="1"/>
</dbReference>
<dbReference type="Pfam" id="PF01351">
    <property type="entry name" value="RNase_HII"/>
    <property type="match status" value="1"/>
</dbReference>
<dbReference type="SUPFAM" id="SSF53098">
    <property type="entry name" value="Ribonuclease H-like"/>
    <property type="match status" value="1"/>
</dbReference>
<dbReference type="PROSITE" id="PS51975">
    <property type="entry name" value="RNASE_H_2"/>
    <property type="match status" value="1"/>
</dbReference>
<feature type="chain" id="PRO_1000074922" description="Ribonuclease HII">
    <location>
        <begin position="1"/>
        <end position="198"/>
    </location>
</feature>
<feature type="domain" description="RNase H type-2" evidence="2">
    <location>
        <begin position="10"/>
        <end position="198"/>
    </location>
</feature>
<feature type="binding site" evidence="1">
    <location>
        <position position="16"/>
    </location>
    <ligand>
        <name>a divalent metal cation</name>
        <dbReference type="ChEBI" id="CHEBI:60240"/>
    </ligand>
</feature>
<feature type="binding site" evidence="1">
    <location>
        <position position="17"/>
    </location>
    <ligand>
        <name>a divalent metal cation</name>
        <dbReference type="ChEBI" id="CHEBI:60240"/>
    </ligand>
</feature>
<feature type="binding site" evidence="1">
    <location>
        <position position="108"/>
    </location>
    <ligand>
        <name>a divalent metal cation</name>
        <dbReference type="ChEBI" id="CHEBI:60240"/>
    </ligand>
</feature>
<keyword id="KW-0963">Cytoplasm</keyword>
<keyword id="KW-0255">Endonuclease</keyword>
<keyword id="KW-0378">Hydrolase</keyword>
<keyword id="KW-0464">Manganese</keyword>
<keyword id="KW-0479">Metal-binding</keyword>
<keyword id="KW-0540">Nuclease</keyword>
<sequence length="198" mass="21543">MIEFVYPHTHLVAGVDEVGRGPLVGAVVTAAVILDPARPIAGLNDSKKLSEKRRLALCEEIKEKALSWSLGRAEPYEIDELNILHATMLAMQRAVAGLHIAPEYVLIDGNRCPKLPMPSMAVVKGDSRVPEISAASILAKVTRDAEMAALDIVFPQYGFAQHKGYPTAFHLEKLAEYGATEHHRRSFGPVKRALGLAS</sequence>